<comment type="function">
    <text evidence="1">Catalyzes the phosphorylation of pantothenate (Pan), the first step in CoA biosynthesis.</text>
</comment>
<comment type="catalytic activity">
    <reaction evidence="1">
        <text>(R)-pantothenate + ATP = (R)-4'-phosphopantothenate + ADP + H(+)</text>
        <dbReference type="Rhea" id="RHEA:16373"/>
        <dbReference type="ChEBI" id="CHEBI:10986"/>
        <dbReference type="ChEBI" id="CHEBI:15378"/>
        <dbReference type="ChEBI" id="CHEBI:29032"/>
        <dbReference type="ChEBI" id="CHEBI:30616"/>
        <dbReference type="ChEBI" id="CHEBI:456216"/>
        <dbReference type="EC" id="2.7.1.33"/>
    </reaction>
</comment>
<comment type="cofactor">
    <cofactor evidence="1">
        <name>NH4(+)</name>
        <dbReference type="ChEBI" id="CHEBI:28938"/>
    </cofactor>
    <cofactor evidence="1">
        <name>K(+)</name>
        <dbReference type="ChEBI" id="CHEBI:29103"/>
    </cofactor>
    <text evidence="1">A monovalent cation. Ammonium or potassium.</text>
</comment>
<comment type="pathway">
    <text evidence="1">Cofactor biosynthesis; coenzyme A biosynthesis; CoA from (R)-pantothenate: step 1/5.</text>
</comment>
<comment type="subunit">
    <text evidence="1">Homodimer.</text>
</comment>
<comment type="subcellular location">
    <subcellularLocation>
        <location evidence="1">Cytoplasm</location>
    </subcellularLocation>
</comment>
<comment type="similarity">
    <text evidence="1">Belongs to the type III pantothenate kinase family.</text>
</comment>
<organism>
    <name type="scientific">Stenotrophomonas maltophilia (strain K279a)</name>
    <dbReference type="NCBI Taxonomy" id="522373"/>
    <lineage>
        <taxon>Bacteria</taxon>
        <taxon>Pseudomonadati</taxon>
        <taxon>Pseudomonadota</taxon>
        <taxon>Gammaproteobacteria</taxon>
        <taxon>Lysobacterales</taxon>
        <taxon>Lysobacteraceae</taxon>
        <taxon>Stenotrophomonas</taxon>
        <taxon>Stenotrophomonas maltophilia group</taxon>
    </lineage>
</organism>
<protein>
    <recommendedName>
        <fullName evidence="1">Type III pantothenate kinase</fullName>
        <ecNumber evidence="1">2.7.1.33</ecNumber>
    </recommendedName>
    <alternativeName>
        <fullName evidence="1">PanK-III</fullName>
    </alternativeName>
    <alternativeName>
        <fullName evidence="1">Pantothenic acid kinase</fullName>
    </alternativeName>
</protein>
<gene>
    <name evidence="1" type="primary">coaX</name>
    <name type="ordered locus">Smlt0283</name>
</gene>
<feature type="chain" id="PRO_1000140258" description="Type III pantothenate kinase">
    <location>
        <begin position="1"/>
        <end position="243"/>
    </location>
</feature>
<feature type="active site" description="Proton acceptor" evidence="1">
    <location>
        <position position="100"/>
    </location>
</feature>
<feature type="binding site" evidence="1">
    <location>
        <begin position="7"/>
        <end position="14"/>
    </location>
    <ligand>
        <name>ATP</name>
        <dbReference type="ChEBI" id="CHEBI:30616"/>
    </ligand>
</feature>
<feature type="binding site" evidence="1">
    <location>
        <position position="91"/>
    </location>
    <ligand>
        <name>substrate</name>
    </ligand>
</feature>
<feature type="binding site" evidence="1">
    <location>
        <begin position="98"/>
        <end position="101"/>
    </location>
    <ligand>
        <name>substrate</name>
    </ligand>
</feature>
<feature type="binding site" evidence="1">
    <location>
        <position position="122"/>
    </location>
    <ligand>
        <name>ATP</name>
        <dbReference type="ChEBI" id="CHEBI:30616"/>
    </ligand>
</feature>
<feature type="binding site" evidence="1">
    <location>
        <position position="172"/>
    </location>
    <ligand>
        <name>substrate</name>
    </ligand>
</feature>
<accession>B2FIV8</accession>
<sequence length="243" mass="25189">MSDWLFDLGNSRFKFAPLQGDRAGDVQAWAHGAEGMAGQPPHSLPSGTTAFVASVAAPSLTSAMLDQLQRRFEHVHVVRTSAECAGVRIAYAKPEKFGVDRFLALLAAAKAQRPVLVVGVGTALTIDLLDADGQHHGGRISASPTTMREALHARAVQLPATGGDYSEFANDTADALASGCDGAAVALIERSAQQAHTLLGVAPSLLVHGGGAPALMPLLPGADYHPSLVLDGLARWAVHQPAG</sequence>
<reference key="1">
    <citation type="journal article" date="2008" name="Genome Biol.">
        <title>The complete genome, comparative and functional analysis of Stenotrophomonas maltophilia reveals an organism heavily shielded by drug resistance determinants.</title>
        <authorList>
            <person name="Crossman L.C."/>
            <person name="Gould V.C."/>
            <person name="Dow J.M."/>
            <person name="Vernikos G.S."/>
            <person name="Okazaki A."/>
            <person name="Sebaihia M."/>
            <person name="Saunders D."/>
            <person name="Arrowsmith C."/>
            <person name="Carver T."/>
            <person name="Peters N."/>
            <person name="Adlem E."/>
            <person name="Kerhornou A."/>
            <person name="Lord A."/>
            <person name="Murphy L."/>
            <person name="Seeger K."/>
            <person name="Squares R."/>
            <person name="Rutter S."/>
            <person name="Quail M.A."/>
            <person name="Rajandream M.A."/>
            <person name="Harris D."/>
            <person name="Churcher C."/>
            <person name="Bentley S.D."/>
            <person name="Parkhill J."/>
            <person name="Thomson N.R."/>
            <person name="Avison M.B."/>
        </authorList>
    </citation>
    <scope>NUCLEOTIDE SEQUENCE [LARGE SCALE GENOMIC DNA]</scope>
    <source>
        <strain>K279a</strain>
    </source>
</reference>
<evidence type="ECO:0000255" key="1">
    <source>
        <dbReference type="HAMAP-Rule" id="MF_01274"/>
    </source>
</evidence>
<keyword id="KW-0067">ATP-binding</keyword>
<keyword id="KW-0173">Coenzyme A biosynthesis</keyword>
<keyword id="KW-0963">Cytoplasm</keyword>
<keyword id="KW-0418">Kinase</keyword>
<keyword id="KW-0547">Nucleotide-binding</keyword>
<keyword id="KW-0630">Potassium</keyword>
<keyword id="KW-1185">Reference proteome</keyword>
<keyword id="KW-0808">Transferase</keyword>
<proteinExistence type="inferred from homology"/>
<name>COAX_STRMK</name>
<dbReference type="EC" id="2.7.1.33" evidence="1"/>
<dbReference type="EMBL" id="AM743169">
    <property type="protein sequence ID" value="CAQ43887.1"/>
    <property type="molecule type" value="Genomic_DNA"/>
</dbReference>
<dbReference type="RefSeq" id="WP_005407698.1">
    <property type="nucleotide sequence ID" value="NC_010943.1"/>
</dbReference>
<dbReference type="SMR" id="B2FIV8"/>
<dbReference type="EnsemblBacteria" id="CAQ43887">
    <property type="protein sequence ID" value="CAQ43887"/>
    <property type="gene ID" value="Smlt0283"/>
</dbReference>
<dbReference type="KEGG" id="sml:Smlt0283"/>
<dbReference type="eggNOG" id="COG1521">
    <property type="taxonomic scope" value="Bacteria"/>
</dbReference>
<dbReference type="HOGENOM" id="CLU_066627_0_0_6"/>
<dbReference type="UniPathway" id="UPA00241">
    <property type="reaction ID" value="UER00352"/>
</dbReference>
<dbReference type="Proteomes" id="UP000008840">
    <property type="component" value="Chromosome"/>
</dbReference>
<dbReference type="GO" id="GO:0005737">
    <property type="term" value="C:cytoplasm"/>
    <property type="evidence" value="ECO:0007669"/>
    <property type="project" value="UniProtKB-SubCell"/>
</dbReference>
<dbReference type="GO" id="GO:0005524">
    <property type="term" value="F:ATP binding"/>
    <property type="evidence" value="ECO:0007669"/>
    <property type="project" value="UniProtKB-UniRule"/>
</dbReference>
<dbReference type="GO" id="GO:0004594">
    <property type="term" value="F:pantothenate kinase activity"/>
    <property type="evidence" value="ECO:0007669"/>
    <property type="project" value="UniProtKB-UniRule"/>
</dbReference>
<dbReference type="GO" id="GO:0015937">
    <property type="term" value="P:coenzyme A biosynthetic process"/>
    <property type="evidence" value="ECO:0007669"/>
    <property type="project" value="UniProtKB-UniRule"/>
</dbReference>
<dbReference type="CDD" id="cd24015">
    <property type="entry name" value="ASKHA_NBD_PanK-III"/>
    <property type="match status" value="1"/>
</dbReference>
<dbReference type="Gene3D" id="3.30.420.40">
    <property type="match status" value="2"/>
</dbReference>
<dbReference type="HAMAP" id="MF_01274">
    <property type="entry name" value="Pantothen_kinase_3"/>
    <property type="match status" value="1"/>
</dbReference>
<dbReference type="InterPro" id="IPR043129">
    <property type="entry name" value="ATPase_NBD"/>
</dbReference>
<dbReference type="InterPro" id="IPR004619">
    <property type="entry name" value="Type_III_PanK"/>
</dbReference>
<dbReference type="NCBIfam" id="TIGR00671">
    <property type="entry name" value="baf"/>
    <property type="match status" value="1"/>
</dbReference>
<dbReference type="NCBIfam" id="NF009864">
    <property type="entry name" value="PRK13327.1"/>
    <property type="match status" value="1"/>
</dbReference>
<dbReference type="PANTHER" id="PTHR34265">
    <property type="entry name" value="TYPE III PANTOTHENATE KINASE"/>
    <property type="match status" value="1"/>
</dbReference>
<dbReference type="PANTHER" id="PTHR34265:SF1">
    <property type="entry name" value="TYPE III PANTOTHENATE KINASE"/>
    <property type="match status" value="1"/>
</dbReference>
<dbReference type="Pfam" id="PF03309">
    <property type="entry name" value="Pan_kinase"/>
    <property type="match status" value="1"/>
</dbReference>
<dbReference type="SUPFAM" id="SSF53067">
    <property type="entry name" value="Actin-like ATPase domain"/>
    <property type="match status" value="2"/>
</dbReference>